<comment type="function">
    <text evidence="1">Could be a nuclease involved in processing of the 5'-end of pre-16S rRNA.</text>
</comment>
<comment type="subcellular location">
    <subcellularLocation>
        <location evidence="1">Cytoplasm</location>
    </subcellularLocation>
</comment>
<comment type="similarity">
    <text evidence="1">Belongs to the YqgF nuclease family.</text>
</comment>
<gene>
    <name type="ordered locus">APP7_0233</name>
</gene>
<name>YQGF_ACTP7</name>
<organism>
    <name type="scientific">Actinobacillus pleuropneumoniae serotype 7 (strain AP76)</name>
    <dbReference type="NCBI Taxonomy" id="537457"/>
    <lineage>
        <taxon>Bacteria</taxon>
        <taxon>Pseudomonadati</taxon>
        <taxon>Pseudomonadota</taxon>
        <taxon>Gammaproteobacteria</taxon>
        <taxon>Pasteurellales</taxon>
        <taxon>Pasteurellaceae</taxon>
        <taxon>Actinobacillus</taxon>
    </lineage>
</organism>
<sequence length="137" mass="15290">MARTILAFDFGTYSIGCAVGQDITGTAQGLPSFKAQDGIPNWDQIEKVIKEWQPERLVVGLPLNMDGTEQPLTQRAKKFANRLNGRFNLPVELQDERLTTVSAKAEIFERGGYKALKKDKVDSISACLILESWFEAQ</sequence>
<protein>
    <recommendedName>
        <fullName evidence="1">Putative pre-16S rRNA nuclease</fullName>
        <ecNumber evidence="1">3.1.-.-</ecNumber>
    </recommendedName>
</protein>
<dbReference type="EC" id="3.1.-.-" evidence="1"/>
<dbReference type="EMBL" id="CP001091">
    <property type="protein sequence ID" value="ACE60885.1"/>
    <property type="molecule type" value="Genomic_DNA"/>
</dbReference>
<dbReference type="RefSeq" id="WP_005616695.1">
    <property type="nucleotide sequence ID" value="NC_010939.1"/>
</dbReference>
<dbReference type="SMR" id="B3H073"/>
<dbReference type="KEGG" id="apa:APP7_0233"/>
<dbReference type="HOGENOM" id="CLU_098240_3_0_6"/>
<dbReference type="Proteomes" id="UP000001226">
    <property type="component" value="Chromosome"/>
</dbReference>
<dbReference type="GO" id="GO:0005829">
    <property type="term" value="C:cytosol"/>
    <property type="evidence" value="ECO:0007669"/>
    <property type="project" value="TreeGrafter"/>
</dbReference>
<dbReference type="GO" id="GO:0004518">
    <property type="term" value="F:nuclease activity"/>
    <property type="evidence" value="ECO:0007669"/>
    <property type="project" value="UniProtKB-KW"/>
</dbReference>
<dbReference type="GO" id="GO:0000967">
    <property type="term" value="P:rRNA 5'-end processing"/>
    <property type="evidence" value="ECO:0007669"/>
    <property type="project" value="UniProtKB-UniRule"/>
</dbReference>
<dbReference type="CDD" id="cd16964">
    <property type="entry name" value="YqgF"/>
    <property type="match status" value="1"/>
</dbReference>
<dbReference type="FunFam" id="3.30.420.140:FF:000002">
    <property type="entry name" value="Putative pre-16S rRNA nuclease"/>
    <property type="match status" value="1"/>
</dbReference>
<dbReference type="Gene3D" id="3.30.420.140">
    <property type="entry name" value="YqgF/RNase H-like domain"/>
    <property type="match status" value="1"/>
</dbReference>
<dbReference type="HAMAP" id="MF_00651">
    <property type="entry name" value="Nuclease_YqgF"/>
    <property type="match status" value="1"/>
</dbReference>
<dbReference type="InterPro" id="IPR012337">
    <property type="entry name" value="RNaseH-like_sf"/>
</dbReference>
<dbReference type="InterPro" id="IPR005227">
    <property type="entry name" value="YqgF"/>
</dbReference>
<dbReference type="InterPro" id="IPR006641">
    <property type="entry name" value="YqgF/RNaseH-like_dom"/>
</dbReference>
<dbReference type="InterPro" id="IPR037027">
    <property type="entry name" value="YqgF/RNaseH-like_dom_sf"/>
</dbReference>
<dbReference type="NCBIfam" id="TIGR00250">
    <property type="entry name" value="RNAse_H_YqgF"/>
    <property type="match status" value="1"/>
</dbReference>
<dbReference type="PANTHER" id="PTHR33317">
    <property type="entry name" value="POLYNUCLEOTIDYL TRANSFERASE, RIBONUCLEASE H-LIKE SUPERFAMILY PROTEIN"/>
    <property type="match status" value="1"/>
</dbReference>
<dbReference type="PANTHER" id="PTHR33317:SF4">
    <property type="entry name" value="POLYNUCLEOTIDYL TRANSFERASE, RIBONUCLEASE H-LIKE SUPERFAMILY PROTEIN"/>
    <property type="match status" value="1"/>
</dbReference>
<dbReference type="Pfam" id="PF03652">
    <property type="entry name" value="RuvX"/>
    <property type="match status" value="1"/>
</dbReference>
<dbReference type="SMART" id="SM00732">
    <property type="entry name" value="YqgFc"/>
    <property type="match status" value="1"/>
</dbReference>
<dbReference type="SUPFAM" id="SSF53098">
    <property type="entry name" value="Ribonuclease H-like"/>
    <property type="match status" value="1"/>
</dbReference>
<proteinExistence type="inferred from homology"/>
<reference key="1">
    <citation type="submission" date="2008-06" db="EMBL/GenBank/DDBJ databases">
        <title>Genome and proteome analysis of A. pleuropneumoniae serotype 7.</title>
        <authorList>
            <person name="Linke B."/>
            <person name="Buettner F."/>
            <person name="Martinez-Arias R."/>
            <person name="Goesmann A."/>
            <person name="Baltes N."/>
            <person name="Tegetmeyer H."/>
            <person name="Singh M."/>
            <person name="Gerlach G.F."/>
        </authorList>
    </citation>
    <scope>NUCLEOTIDE SEQUENCE [LARGE SCALE GENOMIC DNA]</scope>
    <source>
        <strain>AP76</strain>
    </source>
</reference>
<feature type="chain" id="PRO_1000130989" description="Putative pre-16S rRNA nuclease">
    <location>
        <begin position="1"/>
        <end position="137"/>
    </location>
</feature>
<evidence type="ECO:0000255" key="1">
    <source>
        <dbReference type="HAMAP-Rule" id="MF_00651"/>
    </source>
</evidence>
<accession>B3H073</accession>
<keyword id="KW-0963">Cytoplasm</keyword>
<keyword id="KW-0378">Hydrolase</keyword>
<keyword id="KW-0540">Nuclease</keyword>
<keyword id="KW-0690">Ribosome biogenesis</keyword>